<keyword id="KW-0028">Amino-acid biosynthesis</keyword>
<keyword id="KW-0067">ATP-binding</keyword>
<keyword id="KW-0963">Cytoplasm</keyword>
<keyword id="KW-0418">Kinase</keyword>
<keyword id="KW-0547">Nucleotide-binding</keyword>
<keyword id="KW-0641">Proline biosynthesis</keyword>
<keyword id="KW-1185">Reference proteome</keyword>
<keyword id="KW-0808">Transferase</keyword>
<protein>
    <recommendedName>
        <fullName evidence="1">Glutamate 5-kinase</fullName>
        <ecNumber evidence="1">2.7.2.11</ecNumber>
    </recommendedName>
    <alternativeName>
        <fullName evidence="1">Gamma-glutamyl kinase</fullName>
        <shortName evidence="1">GK</shortName>
    </alternativeName>
</protein>
<gene>
    <name evidence="1" type="primary">proB</name>
    <name type="ordered locus">Mpe_A0514</name>
</gene>
<comment type="function">
    <text evidence="1">Catalyzes the transfer of a phosphate group to glutamate to form L-glutamate 5-phosphate.</text>
</comment>
<comment type="catalytic activity">
    <reaction evidence="1">
        <text>L-glutamate + ATP = L-glutamyl 5-phosphate + ADP</text>
        <dbReference type="Rhea" id="RHEA:14877"/>
        <dbReference type="ChEBI" id="CHEBI:29985"/>
        <dbReference type="ChEBI" id="CHEBI:30616"/>
        <dbReference type="ChEBI" id="CHEBI:58274"/>
        <dbReference type="ChEBI" id="CHEBI:456216"/>
        <dbReference type="EC" id="2.7.2.11"/>
    </reaction>
</comment>
<comment type="pathway">
    <text evidence="1">Amino-acid biosynthesis; L-proline biosynthesis; L-glutamate 5-semialdehyde from L-glutamate: step 1/2.</text>
</comment>
<comment type="subcellular location">
    <subcellularLocation>
        <location evidence="1">Cytoplasm</location>
    </subcellularLocation>
</comment>
<comment type="similarity">
    <text evidence="1">Belongs to the glutamate 5-kinase family.</text>
</comment>
<organism>
    <name type="scientific">Methylibium petroleiphilum (strain ATCC BAA-1232 / LMG 22953 / PM1)</name>
    <dbReference type="NCBI Taxonomy" id="420662"/>
    <lineage>
        <taxon>Bacteria</taxon>
        <taxon>Pseudomonadati</taxon>
        <taxon>Pseudomonadota</taxon>
        <taxon>Betaproteobacteria</taxon>
        <taxon>Burkholderiales</taxon>
        <taxon>Sphaerotilaceae</taxon>
        <taxon>Methylibium</taxon>
    </lineage>
</organism>
<reference key="1">
    <citation type="journal article" date="2007" name="J. Bacteriol.">
        <title>Whole-genome analysis of the methyl tert-butyl ether-degrading beta-proteobacterium Methylibium petroleiphilum PM1.</title>
        <authorList>
            <person name="Kane S.R."/>
            <person name="Chakicherla A.Y."/>
            <person name="Chain P.S.G."/>
            <person name="Schmidt R."/>
            <person name="Shin M.W."/>
            <person name="Legler T.C."/>
            <person name="Scow K.M."/>
            <person name="Larimer F.W."/>
            <person name="Lucas S.M."/>
            <person name="Richardson P.M."/>
            <person name="Hristova K.R."/>
        </authorList>
    </citation>
    <scope>NUCLEOTIDE SEQUENCE [LARGE SCALE GENOMIC DNA]</scope>
    <source>
        <strain>ATCC BAA-1232 / LMG 22953 / PM1</strain>
    </source>
</reference>
<dbReference type="EC" id="2.7.2.11" evidence="1"/>
<dbReference type="EMBL" id="CP000555">
    <property type="protein sequence ID" value="ABM93476.1"/>
    <property type="molecule type" value="Genomic_DNA"/>
</dbReference>
<dbReference type="RefSeq" id="WP_011828114.1">
    <property type="nucleotide sequence ID" value="NC_008825.1"/>
</dbReference>
<dbReference type="SMR" id="A2SD37"/>
<dbReference type="STRING" id="420662.Mpe_A0514"/>
<dbReference type="KEGG" id="mpt:Mpe_A0514"/>
<dbReference type="eggNOG" id="COG0263">
    <property type="taxonomic scope" value="Bacteria"/>
</dbReference>
<dbReference type="HOGENOM" id="CLU_025400_2_0_4"/>
<dbReference type="UniPathway" id="UPA00098">
    <property type="reaction ID" value="UER00359"/>
</dbReference>
<dbReference type="Proteomes" id="UP000000366">
    <property type="component" value="Chromosome"/>
</dbReference>
<dbReference type="GO" id="GO:0005829">
    <property type="term" value="C:cytosol"/>
    <property type="evidence" value="ECO:0007669"/>
    <property type="project" value="TreeGrafter"/>
</dbReference>
<dbReference type="GO" id="GO:0005524">
    <property type="term" value="F:ATP binding"/>
    <property type="evidence" value="ECO:0007669"/>
    <property type="project" value="UniProtKB-KW"/>
</dbReference>
<dbReference type="GO" id="GO:0004349">
    <property type="term" value="F:glutamate 5-kinase activity"/>
    <property type="evidence" value="ECO:0007669"/>
    <property type="project" value="UniProtKB-UniRule"/>
</dbReference>
<dbReference type="GO" id="GO:0003723">
    <property type="term" value="F:RNA binding"/>
    <property type="evidence" value="ECO:0007669"/>
    <property type="project" value="InterPro"/>
</dbReference>
<dbReference type="GO" id="GO:0055129">
    <property type="term" value="P:L-proline biosynthetic process"/>
    <property type="evidence" value="ECO:0007669"/>
    <property type="project" value="UniProtKB-UniRule"/>
</dbReference>
<dbReference type="CDD" id="cd04242">
    <property type="entry name" value="AAK_G5K_ProB"/>
    <property type="match status" value="1"/>
</dbReference>
<dbReference type="CDD" id="cd21157">
    <property type="entry name" value="PUA_G5K"/>
    <property type="match status" value="1"/>
</dbReference>
<dbReference type="FunFam" id="2.30.130.10:FF:000007">
    <property type="entry name" value="Glutamate 5-kinase"/>
    <property type="match status" value="1"/>
</dbReference>
<dbReference type="FunFam" id="3.40.1160.10:FF:000018">
    <property type="entry name" value="Glutamate 5-kinase"/>
    <property type="match status" value="1"/>
</dbReference>
<dbReference type="Gene3D" id="3.40.1160.10">
    <property type="entry name" value="Acetylglutamate kinase-like"/>
    <property type="match status" value="1"/>
</dbReference>
<dbReference type="Gene3D" id="2.30.130.10">
    <property type="entry name" value="PUA domain"/>
    <property type="match status" value="1"/>
</dbReference>
<dbReference type="HAMAP" id="MF_00456">
    <property type="entry name" value="ProB"/>
    <property type="match status" value="1"/>
</dbReference>
<dbReference type="InterPro" id="IPR036393">
    <property type="entry name" value="AceGlu_kinase-like_sf"/>
</dbReference>
<dbReference type="InterPro" id="IPR001048">
    <property type="entry name" value="Asp/Glu/Uridylate_kinase"/>
</dbReference>
<dbReference type="InterPro" id="IPR041739">
    <property type="entry name" value="G5K_ProB"/>
</dbReference>
<dbReference type="InterPro" id="IPR001057">
    <property type="entry name" value="Glu/AcGlu_kinase"/>
</dbReference>
<dbReference type="InterPro" id="IPR011529">
    <property type="entry name" value="Glu_5kinase"/>
</dbReference>
<dbReference type="InterPro" id="IPR005715">
    <property type="entry name" value="Glu_5kinase/COase_Synthase"/>
</dbReference>
<dbReference type="InterPro" id="IPR019797">
    <property type="entry name" value="Glutamate_5-kinase_CS"/>
</dbReference>
<dbReference type="InterPro" id="IPR002478">
    <property type="entry name" value="PUA"/>
</dbReference>
<dbReference type="InterPro" id="IPR015947">
    <property type="entry name" value="PUA-like_sf"/>
</dbReference>
<dbReference type="InterPro" id="IPR036974">
    <property type="entry name" value="PUA_sf"/>
</dbReference>
<dbReference type="NCBIfam" id="TIGR01027">
    <property type="entry name" value="proB"/>
    <property type="match status" value="1"/>
</dbReference>
<dbReference type="PANTHER" id="PTHR43654">
    <property type="entry name" value="GLUTAMATE 5-KINASE"/>
    <property type="match status" value="1"/>
</dbReference>
<dbReference type="PANTHER" id="PTHR43654:SF1">
    <property type="entry name" value="ISOPENTENYL PHOSPHATE KINASE"/>
    <property type="match status" value="1"/>
</dbReference>
<dbReference type="Pfam" id="PF00696">
    <property type="entry name" value="AA_kinase"/>
    <property type="match status" value="1"/>
</dbReference>
<dbReference type="Pfam" id="PF01472">
    <property type="entry name" value="PUA"/>
    <property type="match status" value="1"/>
</dbReference>
<dbReference type="PIRSF" id="PIRSF000729">
    <property type="entry name" value="GK"/>
    <property type="match status" value="1"/>
</dbReference>
<dbReference type="PRINTS" id="PR00474">
    <property type="entry name" value="GLU5KINASE"/>
</dbReference>
<dbReference type="SMART" id="SM00359">
    <property type="entry name" value="PUA"/>
    <property type="match status" value="1"/>
</dbReference>
<dbReference type="SUPFAM" id="SSF53633">
    <property type="entry name" value="Carbamate kinase-like"/>
    <property type="match status" value="1"/>
</dbReference>
<dbReference type="SUPFAM" id="SSF88697">
    <property type="entry name" value="PUA domain-like"/>
    <property type="match status" value="1"/>
</dbReference>
<dbReference type="PROSITE" id="PS00902">
    <property type="entry name" value="GLUTAMATE_5_KINASE"/>
    <property type="match status" value="1"/>
</dbReference>
<dbReference type="PROSITE" id="PS50890">
    <property type="entry name" value="PUA"/>
    <property type="match status" value="1"/>
</dbReference>
<name>PROB_METPP</name>
<evidence type="ECO:0000255" key="1">
    <source>
        <dbReference type="HAMAP-Rule" id="MF_00456"/>
    </source>
</evidence>
<proteinExistence type="inferred from homology"/>
<accession>A2SD37</accession>
<feature type="chain" id="PRO_1000081071" description="Glutamate 5-kinase">
    <location>
        <begin position="1"/>
        <end position="372"/>
    </location>
</feature>
<feature type="domain" description="PUA" evidence="1">
    <location>
        <begin position="280"/>
        <end position="358"/>
    </location>
</feature>
<feature type="binding site" evidence="1">
    <location>
        <position position="14"/>
    </location>
    <ligand>
        <name>ATP</name>
        <dbReference type="ChEBI" id="CHEBI:30616"/>
    </ligand>
</feature>
<feature type="binding site" evidence="1">
    <location>
        <position position="54"/>
    </location>
    <ligand>
        <name>substrate</name>
    </ligand>
</feature>
<feature type="binding site" evidence="1">
    <location>
        <position position="141"/>
    </location>
    <ligand>
        <name>substrate</name>
    </ligand>
</feature>
<feature type="binding site" evidence="1">
    <location>
        <position position="153"/>
    </location>
    <ligand>
        <name>substrate</name>
    </ligand>
</feature>
<feature type="binding site" evidence="1">
    <location>
        <begin position="173"/>
        <end position="174"/>
    </location>
    <ligand>
        <name>ATP</name>
        <dbReference type="ChEBI" id="CHEBI:30616"/>
    </ligand>
</feature>
<sequence length="372" mass="39424">MSEVLRGARRIVVKVGSSLVTNEGRGVDAAAIGNWCRQLASLAGQGREVLMVSSGAIAEGMKRLGWNARPKEIHELQAAAAVGQMGLAQMYESKLSEHGIGSAQVLLTHADLADRERYLNARSTLLTLLSLKVIPVINENDTVVNDEIKFGDNDTLGALVANLVDADALVILTDQPGLYSADPRKDPQARFIGEAVAGTPELERMAGGAGSSLGRGGMITKVLAAKRASSSGASTVIAWGREPDVLLRLADGEAIGTLLVARTAKLAARKQWMADHLQMRGTVVIDDGAVAKLRDEGKSLLPIGVVEVQGEFVRGDVIAVRSQVGIEIARGLANYASSEARLIARKPSSQIESLLGYSNEPEMIHRTNLVLA</sequence>